<sequence>MSSSYYVNALFSKYTAGASLFQNAEPTSCSFASNSQRSGYGPGAGAFASSMPGLYNVNSTIYQSPFSSGYSLGSDAYNLHCSSFDQNIPVLCNDLTKPSCEKAEERQPAQPGRGQFRIYPWMRSSGPDRKRGRQTYTRYQTLELEKEFHFNRYLTRRRRIEYAHALCLTERQIKIWFQNRRMKWKKEHKEESSSTPAPNESRQQQRLWRKWKKMKKRRIRESHSRKQSLEITYARDSCKSSL</sequence>
<organism>
    <name type="scientific">Coturnix japonica</name>
    <name type="common">Japanese quail</name>
    <name type="synonym">Coturnix coturnix japonica</name>
    <dbReference type="NCBI Taxonomy" id="93934"/>
    <lineage>
        <taxon>Eukaryota</taxon>
        <taxon>Metazoa</taxon>
        <taxon>Chordata</taxon>
        <taxon>Craniata</taxon>
        <taxon>Vertebrata</taxon>
        <taxon>Euteleostomi</taxon>
        <taxon>Archelosauria</taxon>
        <taxon>Archosauria</taxon>
        <taxon>Dinosauria</taxon>
        <taxon>Saurischia</taxon>
        <taxon>Theropoda</taxon>
        <taxon>Coelurosauria</taxon>
        <taxon>Aves</taxon>
        <taxon>Neognathae</taxon>
        <taxon>Galloanserae</taxon>
        <taxon>Galliformes</taxon>
        <taxon>Phasianidae</taxon>
        <taxon>Perdicinae</taxon>
        <taxon>Coturnix</taxon>
    </lineage>
</organism>
<protein>
    <recommendedName>
        <fullName>Homeobox protein Hox-A7</fullName>
    </recommendedName>
    <alternativeName>
        <fullName>Quox-1</fullName>
    </alternativeName>
</protein>
<gene>
    <name type="primary">HOXA7</name>
    <name type="synonym">QUOX-1</name>
</gene>
<reference key="1">
    <citation type="journal article" date="1991" name="Proc. Natl. Acad. Sci. U.S.A.">
        <title>Quox-1, a quail homeobox gene expressed in the embryonic central nervous system, including the forebrain.</title>
        <authorList>
            <person name="Xue Z.-G."/>
            <person name="Gehring W.J."/>
            <person name="le Douarin N.M."/>
        </authorList>
    </citation>
    <scope>NUCLEOTIDE SEQUENCE [GENOMIC DNA]</scope>
    <source>
        <tissue>Spinal cord</tissue>
    </source>
</reference>
<evidence type="ECO:0000255" key="1">
    <source>
        <dbReference type="PROSITE-ProRule" id="PRU00108"/>
    </source>
</evidence>
<evidence type="ECO:0000256" key="2">
    <source>
        <dbReference type="SAM" id="MobiDB-lite"/>
    </source>
</evidence>
<evidence type="ECO:0000305" key="3"/>
<comment type="function">
    <text>Sequence-specific transcription factor which is part of a developmental regulatory system that provides cells with specific positional identities on the anterior-posterior axis.</text>
</comment>
<comment type="subcellular location">
    <subcellularLocation>
        <location>Nucleus</location>
    </subcellularLocation>
</comment>
<comment type="tissue specificity">
    <text>Central nervous system including forebrain.</text>
</comment>
<comment type="developmental stage">
    <text>Embryo.</text>
</comment>
<comment type="similarity">
    <text evidence="3">Belongs to the Antp homeobox family.</text>
</comment>
<feature type="chain" id="PRO_0000200076" description="Homeobox protein Hox-A7">
    <location>
        <begin position="1"/>
        <end position="242"/>
    </location>
</feature>
<feature type="repeat" description="Motif KWKK">
    <location>
        <begin position="183"/>
        <end position="186"/>
    </location>
</feature>
<feature type="repeat" description="Motif KWKK">
    <location>
        <begin position="210"/>
        <end position="213"/>
    </location>
</feature>
<feature type="DNA-binding region" description="Homeobox" evidence="1">
    <location>
        <begin position="129"/>
        <end position="188"/>
    </location>
</feature>
<feature type="region of interest" description="Disordered" evidence="2">
    <location>
        <begin position="187"/>
        <end position="227"/>
    </location>
</feature>
<feature type="short sequence motif" description="Antp-type hexapeptide">
    <location>
        <begin position="118"/>
        <end position="123"/>
    </location>
</feature>
<feature type="compositionally biased region" description="Basic residues" evidence="2">
    <location>
        <begin position="207"/>
        <end position="220"/>
    </location>
</feature>
<dbReference type="EMBL" id="M59714">
    <property type="protein sequence ID" value="AAA49501.1"/>
    <property type="molecule type" value="Genomic_DNA"/>
</dbReference>
<dbReference type="PIR" id="A39164">
    <property type="entry name" value="A39164"/>
</dbReference>
<dbReference type="SMR" id="P24061"/>
<dbReference type="Proteomes" id="UP000694412">
    <property type="component" value="Unplaced"/>
</dbReference>
<dbReference type="GO" id="GO:0005634">
    <property type="term" value="C:nucleus"/>
    <property type="evidence" value="ECO:0007669"/>
    <property type="project" value="UniProtKB-SubCell"/>
</dbReference>
<dbReference type="GO" id="GO:0000981">
    <property type="term" value="F:DNA-binding transcription factor activity, RNA polymerase II-specific"/>
    <property type="evidence" value="ECO:0007669"/>
    <property type="project" value="InterPro"/>
</dbReference>
<dbReference type="GO" id="GO:0000978">
    <property type="term" value="F:RNA polymerase II cis-regulatory region sequence-specific DNA binding"/>
    <property type="evidence" value="ECO:0007669"/>
    <property type="project" value="TreeGrafter"/>
</dbReference>
<dbReference type="GO" id="GO:0009952">
    <property type="term" value="P:anterior/posterior pattern specification"/>
    <property type="evidence" value="ECO:0007669"/>
    <property type="project" value="TreeGrafter"/>
</dbReference>
<dbReference type="CDD" id="cd00086">
    <property type="entry name" value="homeodomain"/>
    <property type="match status" value="1"/>
</dbReference>
<dbReference type="FunFam" id="1.10.10.60:FF:000017">
    <property type="entry name" value="Homeobox protein antennapedia"/>
    <property type="match status" value="1"/>
</dbReference>
<dbReference type="Gene3D" id="1.10.10.60">
    <property type="entry name" value="Homeodomain-like"/>
    <property type="match status" value="1"/>
</dbReference>
<dbReference type="InterPro" id="IPR050296">
    <property type="entry name" value="Antp_homeobox"/>
</dbReference>
<dbReference type="InterPro" id="IPR001356">
    <property type="entry name" value="HD"/>
</dbReference>
<dbReference type="InterPro" id="IPR020479">
    <property type="entry name" value="HD_metazoa"/>
</dbReference>
<dbReference type="InterPro" id="IPR017995">
    <property type="entry name" value="Homeobox_antennapedia"/>
</dbReference>
<dbReference type="InterPro" id="IPR001827">
    <property type="entry name" value="Homeobox_Antennapedia_CS"/>
</dbReference>
<dbReference type="InterPro" id="IPR017970">
    <property type="entry name" value="Homeobox_CS"/>
</dbReference>
<dbReference type="InterPro" id="IPR009057">
    <property type="entry name" value="Homeodomain-like_sf"/>
</dbReference>
<dbReference type="PANTHER" id="PTHR45659">
    <property type="entry name" value="HOMEOBOX PROTEIN HOX"/>
    <property type="match status" value="1"/>
</dbReference>
<dbReference type="PANTHER" id="PTHR45659:SF12">
    <property type="entry name" value="HOMEOBOX PROTEIN HOX-A7"/>
    <property type="match status" value="1"/>
</dbReference>
<dbReference type="Pfam" id="PF00046">
    <property type="entry name" value="Homeodomain"/>
    <property type="match status" value="1"/>
</dbReference>
<dbReference type="PRINTS" id="PR00025">
    <property type="entry name" value="ANTENNAPEDIA"/>
</dbReference>
<dbReference type="PRINTS" id="PR00024">
    <property type="entry name" value="HOMEOBOX"/>
</dbReference>
<dbReference type="SMART" id="SM00389">
    <property type="entry name" value="HOX"/>
    <property type="match status" value="1"/>
</dbReference>
<dbReference type="SUPFAM" id="SSF46689">
    <property type="entry name" value="Homeodomain-like"/>
    <property type="match status" value="1"/>
</dbReference>
<dbReference type="PROSITE" id="PS00032">
    <property type="entry name" value="ANTENNAPEDIA"/>
    <property type="match status" value="1"/>
</dbReference>
<dbReference type="PROSITE" id="PS00027">
    <property type="entry name" value="HOMEOBOX_1"/>
    <property type="match status" value="1"/>
</dbReference>
<dbReference type="PROSITE" id="PS50071">
    <property type="entry name" value="HOMEOBOX_2"/>
    <property type="match status" value="1"/>
</dbReference>
<proteinExistence type="evidence at transcript level"/>
<accession>P24061</accession>
<keyword id="KW-0217">Developmental protein</keyword>
<keyword id="KW-0238">DNA-binding</keyword>
<keyword id="KW-0371">Homeobox</keyword>
<keyword id="KW-0539">Nucleus</keyword>
<keyword id="KW-1185">Reference proteome</keyword>
<keyword id="KW-0677">Repeat</keyword>
<keyword id="KW-0804">Transcription</keyword>
<keyword id="KW-0805">Transcription regulation</keyword>
<name>HXA7_COTJA</name>